<dbReference type="EC" id="3.1.-.-" evidence="1"/>
<dbReference type="EMBL" id="AE017354">
    <property type="protein sequence ID" value="AAU27522.1"/>
    <property type="molecule type" value="Genomic_DNA"/>
</dbReference>
<dbReference type="RefSeq" id="WP_010947169.1">
    <property type="nucleotide sequence ID" value="NC_002942.5"/>
</dbReference>
<dbReference type="RefSeq" id="YP_095469.1">
    <property type="nucleotide sequence ID" value="NC_002942.5"/>
</dbReference>
<dbReference type="SMR" id="Q5ZVK0"/>
<dbReference type="STRING" id="272624.lpg1440"/>
<dbReference type="PaxDb" id="272624-lpg1440"/>
<dbReference type="GeneID" id="57035430"/>
<dbReference type="KEGG" id="lpn:lpg1440"/>
<dbReference type="PATRIC" id="fig|272624.6.peg.1510"/>
<dbReference type="eggNOG" id="COG0319">
    <property type="taxonomic scope" value="Bacteria"/>
</dbReference>
<dbReference type="HOGENOM" id="CLU_106710_0_1_6"/>
<dbReference type="OrthoDB" id="9807740at2"/>
<dbReference type="Proteomes" id="UP000000609">
    <property type="component" value="Chromosome"/>
</dbReference>
<dbReference type="GO" id="GO:0005737">
    <property type="term" value="C:cytoplasm"/>
    <property type="evidence" value="ECO:0007669"/>
    <property type="project" value="UniProtKB-SubCell"/>
</dbReference>
<dbReference type="GO" id="GO:0004222">
    <property type="term" value="F:metalloendopeptidase activity"/>
    <property type="evidence" value="ECO:0007669"/>
    <property type="project" value="InterPro"/>
</dbReference>
<dbReference type="GO" id="GO:0004521">
    <property type="term" value="F:RNA endonuclease activity"/>
    <property type="evidence" value="ECO:0007669"/>
    <property type="project" value="UniProtKB-UniRule"/>
</dbReference>
<dbReference type="GO" id="GO:0008270">
    <property type="term" value="F:zinc ion binding"/>
    <property type="evidence" value="ECO:0007669"/>
    <property type="project" value="UniProtKB-UniRule"/>
</dbReference>
<dbReference type="GO" id="GO:0006364">
    <property type="term" value="P:rRNA processing"/>
    <property type="evidence" value="ECO:0007669"/>
    <property type="project" value="UniProtKB-UniRule"/>
</dbReference>
<dbReference type="Gene3D" id="3.40.390.30">
    <property type="entry name" value="Metalloproteases ('zincins'), catalytic domain"/>
    <property type="match status" value="1"/>
</dbReference>
<dbReference type="HAMAP" id="MF_00009">
    <property type="entry name" value="Endoribonucl_YbeY"/>
    <property type="match status" value="1"/>
</dbReference>
<dbReference type="InterPro" id="IPR023091">
    <property type="entry name" value="MetalPrtase_cat_dom_sf_prd"/>
</dbReference>
<dbReference type="InterPro" id="IPR002036">
    <property type="entry name" value="YbeY"/>
</dbReference>
<dbReference type="InterPro" id="IPR020549">
    <property type="entry name" value="YbeY_CS"/>
</dbReference>
<dbReference type="NCBIfam" id="TIGR00043">
    <property type="entry name" value="rRNA maturation RNase YbeY"/>
    <property type="match status" value="1"/>
</dbReference>
<dbReference type="PANTHER" id="PTHR46986">
    <property type="entry name" value="ENDORIBONUCLEASE YBEY, CHLOROPLASTIC"/>
    <property type="match status" value="1"/>
</dbReference>
<dbReference type="PANTHER" id="PTHR46986:SF1">
    <property type="entry name" value="ENDORIBONUCLEASE YBEY, CHLOROPLASTIC"/>
    <property type="match status" value="1"/>
</dbReference>
<dbReference type="Pfam" id="PF02130">
    <property type="entry name" value="YbeY"/>
    <property type="match status" value="1"/>
</dbReference>
<dbReference type="SUPFAM" id="SSF55486">
    <property type="entry name" value="Metalloproteases ('zincins'), catalytic domain"/>
    <property type="match status" value="1"/>
</dbReference>
<dbReference type="PROSITE" id="PS01306">
    <property type="entry name" value="UPF0054"/>
    <property type="match status" value="1"/>
</dbReference>
<accession>Q5ZVK0</accession>
<sequence>MTYHIDIQNATGKLLPLSEDEITKLASLALRDHKQDAELTVRLVDVEEMTYLNHTYRKKNKPTNVLAFPCSLPANIELECPLLGDVVICPEVLLAESAQFNKSLHAHWSLILIHGVLHLLGYDHIKDEEASIMQMLEAKLLAELGYANPYEVEENELE</sequence>
<keyword id="KW-0963">Cytoplasm</keyword>
<keyword id="KW-0255">Endonuclease</keyword>
<keyword id="KW-0378">Hydrolase</keyword>
<keyword id="KW-0479">Metal-binding</keyword>
<keyword id="KW-0540">Nuclease</keyword>
<keyword id="KW-1185">Reference proteome</keyword>
<keyword id="KW-0690">Ribosome biogenesis</keyword>
<keyword id="KW-0698">rRNA processing</keyword>
<keyword id="KW-0862">Zinc</keyword>
<evidence type="ECO:0000255" key="1">
    <source>
        <dbReference type="HAMAP-Rule" id="MF_00009"/>
    </source>
</evidence>
<comment type="function">
    <text evidence="1">Single strand-specific metallo-endoribonuclease involved in late-stage 70S ribosome quality control and in maturation of the 3' terminus of the 16S rRNA.</text>
</comment>
<comment type="cofactor">
    <cofactor evidence="1">
        <name>Zn(2+)</name>
        <dbReference type="ChEBI" id="CHEBI:29105"/>
    </cofactor>
    <text evidence="1">Binds 1 zinc ion.</text>
</comment>
<comment type="subcellular location">
    <subcellularLocation>
        <location evidence="1">Cytoplasm</location>
    </subcellularLocation>
</comment>
<comment type="similarity">
    <text evidence="1">Belongs to the endoribonuclease YbeY family.</text>
</comment>
<protein>
    <recommendedName>
        <fullName evidence="1">Endoribonuclease YbeY</fullName>
        <ecNumber evidence="1">3.1.-.-</ecNumber>
    </recommendedName>
</protein>
<proteinExistence type="inferred from homology"/>
<reference key="1">
    <citation type="journal article" date="2004" name="Science">
        <title>The genomic sequence of the accidental pathogen Legionella pneumophila.</title>
        <authorList>
            <person name="Chien M."/>
            <person name="Morozova I."/>
            <person name="Shi S."/>
            <person name="Sheng H."/>
            <person name="Chen J."/>
            <person name="Gomez S.M."/>
            <person name="Asamani G."/>
            <person name="Hill K."/>
            <person name="Nuara J."/>
            <person name="Feder M."/>
            <person name="Rineer J."/>
            <person name="Greenberg J.J."/>
            <person name="Steshenko V."/>
            <person name="Park S.H."/>
            <person name="Zhao B."/>
            <person name="Teplitskaya E."/>
            <person name="Edwards J.R."/>
            <person name="Pampou S."/>
            <person name="Georghiou A."/>
            <person name="Chou I.-C."/>
            <person name="Iannuccilli W."/>
            <person name="Ulz M.E."/>
            <person name="Kim D.H."/>
            <person name="Geringer-Sameth A."/>
            <person name="Goldsberry C."/>
            <person name="Morozov P."/>
            <person name="Fischer S.G."/>
            <person name="Segal G."/>
            <person name="Qu X."/>
            <person name="Rzhetsky A."/>
            <person name="Zhang P."/>
            <person name="Cayanis E."/>
            <person name="De Jong P.J."/>
            <person name="Ju J."/>
            <person name="Kalachikov S."/>
            <person name="Shuman H.A."/>
            <person name="Russo J.J."/>
        </authorList>
    </citation>
    <scope>NUCLEOTIDE SEQUENCE [LARGE SCALE GENOMIC DNA]</scope>
    <source>
        <strain>Philadelphia 1 / ATCC 33152 / DSM 7513</strain>
    </source>
</reference>
<gene>
    <name evidence="1" type="primary">ybeY</name>
    <name type="ordered locus">lpg1440</name>
</gene>
<feature type="chain" id="PRO_0000102474" description="Endoribonuclease YbeY">
    <location>
        <begin position="1"/>
        <end position="158"/>
    </location>
</feature>
<feature type="binding site" evidence="1">
    <location>
        <position position="114"/>
    </location>
    <ligand>
        <name>Zn(2+)</name>
        <dbReference type="ChEBI" id="CHEBI:29105"/>
        <note>catalytic</note>
    </ligand>
</feature>
<feature type="binding site" evidence="1">
    <location>
        <position position="118"/>
    </location>
    <ligand>
        <name>Zn(2+)</name>
        <dbReference type="ChEBI" id="CHEBI:29105"/>
        <note>catalytic</note>
    </ligand>
</feature>
<feature type="binding site" evidence="1">
    <location>
        <position position="124"/>
    </location>
    <ligand>
        <name>Zn(2+)</name>
        <dbReference type="ChEBI" id="CHEBI:29105"/>
        <note>catalytic</note>
    </ligand>
</feature>
<name>YBEY_LEGPH</name>
<organism>
    <name type="scientific">Legionella pneumophila subsp. pneumophila (strain Philadelphia 1 / ATCC 33152 / DSM 7513)</name>
    <dbReference type="NCBI Taxonomy" id="272624"/>
    <lineage>
        <taxon>Bacteria</taxon>
        <taxon>Pseudomonadati</taxon>
        <taxon>Pseudomonadota</taxon>
        <taxon>Gammaproteobacteria</taxon>
        <taxon>Legionellales</taxon>
        <taxon>Legionellaceae</taxon>
        <taxon>Legionella</taxon>
    </lineage>
</organism>